<dbReference type="EC" id="2.1.1.14" evidence="1"/>
<dbReference type="EMBL" id="CP001219">
    <property type="protein sequence ID" value="ACK80924.1"/>
    <property type="molecule type" value="Genomic_DNA"/>
</dbReference>
<dbReference type="RefSeq" id="WP_012536066.1">
    <property type="nucleotide sequence ID" value="NC_011761.1"/>
</dbReference>
<dbReference type="SMR" id="B7J432"/>
<dbReference type="STRING" id="243159.AFE_0288"/>
<dbReference type="PaxDb" id="243159-AFE_0288"/>
<dbReference type="GeneID" id="65279670"/>
<dbReference type="KEGG" id="afr:AFE_0288"/>
<dbReference type="eggNOG" id="COG0620">
    <property type="taxonomic scope" value="Bacteria"/>
</dbReference>
<dbReference type="HOGENOM" id="CLU_013175_0_0_6"/>
<dbReference type="UniPathway" id="UPA00051">
    <property type="reaction ID" value="UER00082"/>
</dbReference>
<dbReference type="Proteomes" id="UP000001362">
    <property type="component" value="Chromosome"/>
</dbReference>
<dbReference type="GO" id="GO:0003871">
    <property type="term" value="F:5-methyltetrahydropteroyltriglutamate-homocysteine S-methyltransferase activity"/>
    <property type="evidence" value="ECO:0007669"/>
    <property type="project" value="UniProtKB-UniRule"/>
</dbReference>
<dbReference type="GO" id="GO:0008270">
    <property type="term" value="F:zinc ion binding"/>
    <property type="evidence" value="ECO:0007669"/>
    <property type="project" value="InterPro"/>
</dbReference>
<dbReference type="GO" id="GO:0009086">
    <property type="term" value="P:methionine biosynthetic process"/>
    <property type="evidence" value="ECO:0007669"/>
    <property type="project" value="UniProtKB-UniRule"/>
</dbReference>
<dbReference type="GO" id="GO:0032259">
    <property type="term" value="P:methylation"/>
    <property type="evidence" value="ECO:0007669"/>
    <property type="project" value="UniProtKB-KW"/>
</dbReference>
<dbReference type="CDD" id="cd03311">
    <property type="entry name" value="CIMS_C_terminal_like"/>
    <property type="match status" value="1"/>
</dbReference>
<dbReference type="CDD" id="cd03312">
    <property type="entry name" value="CIMS_N_terminal_like"/>
    <property type="match status" value="1"/>
</dbReference>
<dbReference type="FunFam" id="3.20.20.210:FF:000002">
    <property type="entry name" value="5-methyltetrahydropteroyltriglutamate--homocysteine methyltransferase"/>
    <property type="match status" value="1"/>
</dbReference>
<dbReference type="Gene3D" id="3.20.20.210">
    <property type="match status" value="2"/>
</dbReference>
<dbReference type="HAMAP" id="MF_00172">
    <property type="entry name" value="Meth_synth"/>
    <property type="match status" value="1"/>
</dbReference>
<dbReference type="InterPro" id="IPR013215">
    <property type="entry name" value="Cbl-indep_Met_Synth_N"/>
</dbReference>
<dbReference type="InterPro" id="IPR006276">
    <property type="entry name" value="Cobalamin-indep_Met_synthase"/>
</dbReference>
<dbReference type="InterPro" id="IPR002629">
    <property type="entry name" value="Met_Synth_C/arc"/>
</dbReference>
<dbReference type="InterPro" id="IPR038071">
    <property type="entry name" value="UROD/MetE-like_sf"/>
</dbReference>
<dbReference type="NCBIfam" id="NF003556">
    <property type="entry name" value="PRK05222.1"/>
    <property type="match status" value="1"/>
</dbReference>
<dbReference type="PANTHER" id="PTHR30519">
    <property type="entry name" value="5-METHYLTETRAHYDROPTEROYLTRIGLUTAMATE--HOMOCYSTEINE METHYLTRANSFERASE"/>
    <property type="match status" value="1"/>
</dbReference>
<dbReference type="Pfam" id="PF08267">
    <property type="entry name" value="Meth_synt_1"/>
    <property type="match status" value="1"/>
</dbReference>
<dbReference type="Pfam" id="PF01717">
    <property type="entry name" value="Meth_synt_2"/>
    <property type="match status" value="1"/>
</dbReference>
<dbReference type="PIRSF" id="PIRSF000382">
    <property type="entry name" value="MeTrfase_B12_ind"/>
    <property type="match status" value="1"/>
</dbReference>
<dbReference type="SUPFAM" id="SSF51726">
    <property type="entry name" value="UROD/MetE-like"/>
    <property type="match status" value="2"/>
</dbReference>
<name>METE_ACIF2</name>
<reference key="1">
    <citation type="journal article" date="2008" name="BMC Genomics">
        <title>Acidithiobacillus ferrooxidans metabolism: from genome sequence to industrial applications.</title>
        <authorList>
            <person name="Valdes J."/>
            <person name="Pedroso I."/>
            <person name="Quatrini R."/>
            <person name="Dodson R.J."/>
            <person name="Tettelin H."/>
            <person name="Blake R. II"/>
            <person name="Eisen J.A."/>
            <person name="Holmes D.S."/>
        </authorList>
    </citation>
    <scope>NUCLEOTIDE SEQUENCE [LARGE SCALE GENOMIC DNA]</scope>
    <source>
        <strain>ATCC 23270 / DSM 14882 / CIP 104768 / NCIMB 8455</strain>
    </source>
</reference>
<accession>B7J432</accession>
<gene>
    <name evidence="1" type="primary">metE</name>
    <name type="ordered locus">AFE_0288</name>
</gene>
<keyword id="KW-0028">Amino-acid biosynthesis</keyword>
<keyword id="KW-0479">Metal-binding</keyword>
<keyword id="KW-0486">Methionine biosynthesis</keyword>
<keyword id="KW-0489">Methyltransferase</keyword>
<keyword id="KW-1185">Reference proteome</keyword>
<keyword id="KW-0677">Repeat</keyword>
<keyword id="KW-0808">Transferase</keyword>
<keyword id="KW-0862">Zinc</keyword>
<proteinExistence type="inferred from homology"/>
<organism>
    <name type="scientific">Acidithiobacillus ferrooxidans (strain ATCC 23270 / DSM 14882 / CIP 104768 / NCIMB 8455)</name>
    <name type="common">Ferrobacillus ferrooxidans (strain ATCC 23270)</name>
    <dbReference type="NCBI Taxonomy" id="243159"/>
    <lineage>
        <taxon>Bacteria</taxon>
        <taxon>Pseudomonadati</taxon>
        <taxon>Pseudomonadota</taxon>
        <taxon>Acidithiobacillia</taxon>
        <taxon>Acidithiobacillales</taxon>
        <taxon>Acidithiobacillaceae</taxon>
        <taxon>Acidithiobacillus</taxon>
    </lineage>
</organism>
<evidence type="ECO:0000255" key="1">
    <source>
        <dbReference type="HAMAP-Rule" id="MF_00172"/>
    </source>
</evidence>
<feature type="chain" id="PRO_1000191191" description="5-methyltetrahydropteroyltriglutamate--homocysteine methyltransferase">
    <location>
        <begin position="1"/>
        <end position="784"/>
    </location>
</feature>
<feature type="active site" description="Proton donor" evidence="1">
    <location>
        <position position="723"/>
    </location>
</feature>
<feature type="binding site" evidence="1">
    <location>
        <begin position="16"/>
        <end position="19"/>
    </location>
    <ligand>
        <name>5-methyltetrahydropteroyltri-L-glutamate</name>
        <dbReference type="ChEBI" id="CHEBI:58207"/>
    </ligand>
</feature>
<feature type="binding site" evidence="1">
    <location>
        <position position="112"/>
    </location>
    <ligand>
        <name>5-methyltetrahydropteroyltri-L-glutamate</name>
        <dbReference type="ChEBI" id="CHEBI:58207"/>
    </ligand>
</feature>
<feature type="binding site" evidence="1">
    <location>
        <begin position="460"/>
        <end position="462"/>
    </location>
    <ligand>
        <name>L-homocysteine</name>
        <dbReference type="ChEBI" id="CHEBI:58199"/>
    </ligand>
</feature>
<feature type="binding site" evidence="1">
    <location>
        <begin position="460"/>
        <end position="462"/>
    </location>
    <ligand>
        <name>L-methionine</name>
        <dbReference type="ChEBI" id="CHEBI:57844"/>
    </ligand>
</feature>
<feature type="binding site" evidence="1">
    <location>
        <position position="513"/>
    </location>
    <ligand>
        <name>L-homocysteine</name>
        <dbReference type="ChEBI" id="CHEBI:58199"/>
    </ligand>
</feature>
<feature type="binding site" evidence="1">
    <location>
        <position position="513"/>
    </location>
    <ligand>
        <name>L-methionine</name>
        <dbReference type="ChEBI" id="CHEBI:57844"/>
    </ligand>
</feature>
<feature type="binding site" evidence="1">
    <location>
        <position position="590"/>
    </location>
    <ligand>
        <name>5-methyltetrahydropteroyltri-L-glutamate</name>
        <dbReference type="ChEBI" id="CHEBI:58207"/>
    </ligand>
</feature>
<feature type="binding site" evidence="1">
    <location>
        <position position="628"/>
    </location>
    <ligand>
        <name>L-homocysteine</name>
        <dbReference type="ChEBI" id="CHEBI:58199"/>
    </ligand>
</feature>
<feature type="binding site" evidence="1">
    <location>
        <position position="628"/>
    </location>
    <ligand>
        <name>L-methionine</name>
        <dbReference type="ChEBI" id="CHEBI:57844"/>
    </ligand>
</feature>
<feature type="binding site" evidence="1">
    <location>
        <position position="634"/>
    </location>
    <ligand>
        <name>5-methyltetrahydropteroyltri-L-glutamate</name>
        <dbReference type="ChEBI" id="CHEBI:58207"/>
    </ligand>
</feature>
<feature type="binding site" evidence="1">
    <location>
        <position position="670"/>
    </location>
    <ligand>
        <name>Zn(2+)</name>
        <dbReference type="ChEBI" id="CHEBI:29105"/>
        <note>catalytic</note>
    </ligand>
</feature>
<feature type="binding site" evidence="1">
    <location>
        <position position="672"/>
    </location>
    <ligand>
        <name>Zn(2+)</name>
        <dbReference type="ChEBI" id="CHEBI:29105"/>
        <note>catalytic</note>
    </ligand>
</feature>
<feature type="binding site" evidence="1">
    <location>
        <position position="694"/>
    </location>
    <ligand>
        <name>Zn(2+)</name>
        <dbReference type="ChEBI" id="CHEBI:29105"/>
        <note>catalytic</note>
    </ligand>
</feature>
<feature type="binding site" evidence="1">
    <location>
        <position position="755"/>
    </location>
    <ligand>
        <name>Zn(2+)</name>
        <dbReference type="ChEBI" id="CHEBI:29105"/>
        <note>catalytic</note>
    </ligand>
</feature>
<comment type="function">
    <text evidence="1">Catalyzes the transfer of a methyl group from 5-methyltetrahydrofolate to homocysteine resulting in methionine formation.</text>
</comment>
<comment type="catalytic activity">
    <reaction evidence="1">
        <text>5-methyltetrahydropteroyltri-L-glutamate + L-homocysteine = tetrahydropteroyltri-L-glutamate + L-methionine</text>
        <dbReference type="Rhea" id="RHEA:21196"/>
        <dbReference type="ChEBI" id="CHEBI:57844"/>
        <dbReference type="ChEBI" id="CHEBI:58140"/>
        <dbReference type="ChEBI" id="CHEBI:58199"/>
        <dbReference type="ChEBI" id="CHEBI:58207"/>
        <dbReference type="EC" id="2.1.1.14"/>
    </reaction>
</comment>
<comment type="cofactor">
    <cofactor evidence="1">
        <name>Zn(2+)</name>
        <dbReference type="ChEBI" id="CHEBI:29105"/>
    </cofactor>
    <text evidence="1">Binds 1 zinc ion per subunit.</text>
</comment>
<comment type="pathway">
    <text evidence="1">Amino-acid biosynthesis; L-methionine biosynthesis via de novo pathway; L-methionine from L-homocysteine (MetE route): step 1/1.</text>
</comment>
<comment type="similarity">
    <text evidence="1">Belongs to the vitamin-B12 independent methionine synthase family.</text>
</comment>
<protein>
    <recommendedName>
        <fullName evidence="1">5-methyltetrahydropteroyltriglutamate--homocysteine methyltransferase</fullName>
        <ecNumber evidence="1">2.1.1.14</ecNumber>
    </recommendedName>
    <alternativeName>
        <fullName evidence="1">Cobalamin-independent methionine synthase</fullName>
    </alternativeName>
    <alternativeName>
        <fullName evidence="1">Methionine synthase, vitamin-B12 independent isozyme</fullName>
    </alternativeName>
</protein>
<sequence>MTSVHSLGFPRIGHKRELKKALESFWSREIDEQELQSRAAQLRDRHWRIQQTCGMDLVPVGDFSLYDHMLDMSCTLGAIPPRYGFAGGQVGLDTFFAMARGSATQPAMEMTKWFDTNYHFIVPEFHEGMDFRLSSERLFDQVKEVQALGLKAKPVLVGPITYLWLGKEKDLNAEAHHDAQHHHDDSACHGHGAPIGAACFDRLTLLPKVLPVYAEILARLAEMGVEWVQIDEPALALDLPQEWVEALESAYQTLRRDKTPKVLLATYFDSVADHAKALKALPVAGVHLDLRRAPQQLNSFLSDYPADKVLSLGVVDGRNVWRADLDAALELLQPAHKQLGDRLWVAPSCSLLHTPVDLEQETELDAELKSWLSFSVQKLDEVAIIGRALKEGVESVAQELAAARAAVASRKSSPRIHNPAVAQRLEGLGQDDGRRKSPFPIREAAQRARFKLPAFPTTSIGSFPQTPEIRKARLQNRKGELSNADYQKAMEAEIALVVKEQERLGIDVPVHGEPERNDMVEYFGEQLAGFAFTRHGWVQSYGSRYVKPPLIFGDVSRPTPMTVAWSKYAQSLTQRPMKGMLTGPVTILQWSFVRDDQPRERTALQIALAIRDEVRDLIDAGIGIIQIDEPAYREGLPLKRKDWGHYLEWASRAFRISAQIAPDDVQIHTHMCYSEFNDILPAIAAMDADVITIETSRSQMELLDAFATFNYPNEIGPGVYDIHSPRVPSVEEMVGLMEKAVKVVPAERLWINPDCGLKTRKWAEVTPALENMVEAARQVRARHG</sequence>